<gene>
    <name evidence="1" type="primary">clpS</name>
    <name type="ordered locus">KPK_3648</name>
</gene>
<comment type="function">
    <text evidence="1">Involved in the modulation of the specificity of the ClpAP-mediated ATP-dependent protein degradation.</text>
</comment>
<comment type="subunit">
    <text evidence="1">Binds to the N-terminal domain of the chaperone ClpA.</text>
</comment>
<comment type="similarity">
    <text evidence="1">Belongs to the ClpS family.</text>
</comment>
<name>CLPS_KLEP3</name>
<reference key="1">
    <citation type="journal article" date="2008" name="PLoS Genet.">
        <title>Complete genome sequence of the N2-fixing broad host range endophyte Klebsiella pneumoniae 342 and virulence predictions verified in mice.</title>
        <authorList>
            <person name="Fouts D.E."/>
            <person name="Tyler H.L."/>
            <person name="DeBoy R.T."/>
            <person name="Daugherty S."/>
            <person name="Ren Q."/>
            <person name="Badger J.H."/>
            <person name="Durkin A.S."/>
            <person name="Huot H."/>
            <person name="Shrivastava S."/>
            <person name="Kothari S."/>
            <person name="Dodson R.J."/>
            <person name="Mohamoud Y."/>
            <person name="Khouri H."/>
            <person name="Roesch L.F.W."/>
            <person name="Krogfelt K.A."/>
            <person name="Struve C."/>
            <person name="Triplett E.W."/>
            <person name="Methe B.A."/>
        </authorList>
    </citation>
    <scope>NUCLEOTIDE SEQUENCE [LARGE SCALE GENOMIC DNA]</scope>
    <source>
        <strain>342</strain>
    </source>
</reference>
<evidence type="ECO:0000255" key="1">
    <source>
        <dbReference type="HAMAP-Rule" id="MF_00302"/>
    </source>
</evidence>
<organism>
    <name type="scientific">Klebsiella pneumoniae (strain 342)</name>
    <dbReference type="NCBI Taxonomy" id="507522"/>
    <lineage>
        <taxon>Bacteria</taxon>
        <taxon>Pseudomonadati</taxon>
        <taxon>Pseudomonadota</taxon>
        <taxon>Gammaproteobacteria</taxon>
        <taxon>Enterobacterales</taxon>
        <taxon>Enterobacteriaceae</taxon>
        <taxon>Klebsiella/Raoultella group</taxon>
        <taxon>Klebsiella</taxon>
        <taxon>Klebsiella pneumoniae complex</taxon>
    </lineage>
</organism>
<accession>B5XYB2</accession>
<protein>
    <recommendedName>
        <fullName evidence="1">ATP-dependent Clp protease adapter protein ClpS</fullName>
    </recommendedName>
</protein>
<feature type="chain" id="PRO_1000115459" description="ATP-dependent Clp protease adapter protein ClpS">
    <location>
        <begin position="1"/>
        <end position="105"/>
    </location>
</feature>
<sequence length="105" mass="12205">MSKRDWLDFEHLVDDEVRDAIKPPSMYKVILVNDDYTPMEFVIDVLQKFFSYDVERATQLMLTVHYEGKAICGVFTAEVAETKVAMVNQYARENEHPLLCTLEKA</sequence>
<dbReference type="EMBL" id="CP000964">
    <property type="protein sequence ID" value="ACI06891.1"/>
    <property type="molecule type" value="Genomic_DNA"/>
</dbReference>
<dbReference type="SMR" id="B5XYB2"/>
<dbReference type="KEGG" id="kpe:KPK_3648"/>
<dbReference type="HOGENOM" id="CLU_134358_2_1_6"/>
<dbReference type="Proteomes" id="UP000001734">
    <property type="component" value="Chromosome"/>
</dbReference>
<dbReference type="GO" id="GO:0030163">
    <property type="term" value="P:protein catabolic process"/>
    <property type="evidence" value="ECO:0007669"/>
    <property type="project" value="InterPro"/>
</dbReference>
<dbReference type="GO" id="GO:0006508">
    <property type="term" value="P:proteolysis"/>
    <property type="evidence" value="ECO:0007669"/>
    <property type="project" value="UniProtKB-UniRule"/>
</dbReference>
<dbReference type="FunFam" id="3.30.1390.10:FF:000002">
    <property type="entry name" value="ATP-dependent Clp protease adapter protein ClpS"/>
    <property type="match status" value="1"/>
</dbReference>
<dbReference type="Gene3D" id="3.30.1390.10">
    <property type="match status" value="1"/>
</dbReference>
<dbReference type="HAMAP" id="MF_00302">
    <property type="entry name" value="ClpS"/>
    <property type="match status" value="1"/>
</dbReference>
<dbReference type="InterPro" id="IPR022935">
    <property type="entry name" value="ClpS"/>
</dbReference>
<dbReference type="InterPro" id="IPR003769">
    <property type="entry name" value="ClpS_core"/>
</dbReference>
<dbReference type="InterPro" id="IPR014719">
    <property type="entry name" value="Ribosomal_bL12_C/ClpS-like"/>
</dbReference>
<dbReference type="NCBIfam" id="NF000670">
    <property type="entry name" value="PRK00033.1-3"/>
    <property type="match status" value="1"/>
</dbReference>
<dbReference type="NCBIfam" id="NF000672">
    <property type="entry name" value="PRK00033.1-5"/>
    <property type="match status" value="1"/>
</dbReference>
<dbReference type="PANTHER" id="PTHR33473:SF19">
    <property type="entry name" value="ATP-DEPENDENT CLP PROTEASE ADAPTER PROTEIN CLPS"/>
    <property type="match status" value="1"/>
</dbReference>
<dbReference type="PANTHER" id="PTHR33473">
    <property type="entry name" value="ATP-DEPENDENT CLP PROTEASE ADAPTER PROTEIN CLPS1, CHLOROPLASTIC"/>
    <property type="match status" value="1"/>
</dbReference>
<dbReference type="Pfam" id="PF02617">
    <property type="entry name" value="ClpS"/>
    <property type="match status" value="1"/>
</dbReference>
<dbReference type="SUPFAM" id="SSF54736">
    <property type="entry name" value="ClpS-like"/>
    <property type="match status" value="1"/>
</dbReference>
<proteinExistence type="inferred from homology"/>